<name>YCF4_CALFG</name>
<gene>
    <name evidence="1" type="primary">ycf4</name>
</gene>
<accession>Q7YJW2</accession>
<organism>
    <name type="scientific">Calycanthus floridus var. glaucus</name>
    <name type="common">Eastern sweetshrub</name>
    <name type="synonym">Calycanthus fertilis var. ferax</name>
    <dbReference type="NCBI Taxonomy" id="212734"/>
    <lineage>
        <taxon>Eukaryota</taxon>
        <taxon>Viridiplantae</taxon>
        <taxon>Streptophyta</taxon>
        <taxon>Embryophyta</taxon>
        <taxon>Tracheophyta</taxon>
        <taxon>Spermatophyta</taxon>
        <taxon>Magnoliopsida</taxon>
        <taxon>Magnoliidae</taxon>
        <taxon>Laurales</taxon>
        <taxon>Calycanthaceae</taxon>
        <taxon>Calycanthus</taxon>
    </lineage>
</organism>
<geneLocation type="chloroplast"/>
<proteinExistence type="inferred from homology"/>
<protein>
    <recommendedName>
        <fullName evidence="1">Photosystem I assembly protein Ycf4</fullName>
    </recommendedName>
</protein>
<evidence type="ECO:0000255" key="1">
    <source>
        <dbReference type="HAMAP-Rule" id="MF_00437"/>
    </source>
</evidence>
<reference key="1">
    <citation type="journal article" date="2003" name="Plant Syst. Evol.">
        <title>The chloroplast genome of the 'basal' angiosperm Calycanthus fertilis -- structural and phylogenetic analyses.</title>
        <authorList>
            <person name="Goremykin V."/>
            <person name="Hirsch-Ernst K.I."/>
            <person name="Woelfl S."/>
            <person name="Hellwig F.H."/>
        </authorList>
    </citation>
    <scope>NUCLEOTIDE SEQUENCE [LARGE SCALE GENOMIC DNA]</scope>
</reference>
<dbReference type="EMBL" id="AJ428413">
    <property type="protein sequence ID" value="CAD28732.1"/>
    <property type="molecule type" value="Genomic_DNA"/>
</dbReference>
<dbReference type="RefSeq" id="NP_862765.1">
    <property type="nucleotide sequence ID" value="NC_004993.1"/>
</dbReference>
<dbReference type="GeneID" id="2598092"/>
<dbReference type="GO" id="GO:0009535">
    <property type="term" value="C:chloroplast thylakoid membrane"/>
    <property type="evidence" value="ECO:0007669"/>
    <property type="project" value="UniProtKB-SubCell"/>
</dbReference>
<dbReference type="GO" id="GO:0009522">
    <property type="term" value="C:photosystem I"/>
    <property type="evidence" value="ECO:0007669"/>
    <property type="project" value="InterPro"/>
</dbReference>
<dbReference type="GO" id="GO:0015979">
    <property type="term" value="P:photosynthesis"/>
    <property type="evidence" value="ECO:0007669"/>
    <property type="project" value="UniProtKB-UniRule"/>
</dbReference>
<dbReference type="HAMAP" id="MF_00437">
    <property type="entry name" value="Ycf4"/>
    <property type="match status" value="1"/>
</dbReference>
<dbReference type="InterPro" id="IPR003359">
    <property type="entry name" value="PSI_Ycf4_assembly"/>
</dbReference>
<dbReference type="PANTHER" id="PTHR33288">
    <property type="match status" value="1"/>
</dbReference>
<dbReference type="PANTHER" id="PTHR33288:SF4">
    <property type="entry name" value="PHOTOSYSTEM I ASSEMBLY PROTEIN YCF4"/>
    <property type="match status" value="1"/>
</dbReference>
<dbReference type="Pfam" id="PF02392">
    <property type="entry name" value="Ycf4"/>
    <property type="match status" value="1"/>
</dbReference>
<sequence>MNWRSERIWIELITGSRKTSNFCWACILFLGSLGFLLVGTSSYLGRNLISLFPSQQIIFFPQGIVMSFYGIAGLFISSYLWCTISWNVGSGYDRFDRKEGIVCIFRWGFPGINRRIFLRFLMRDIQSIRMEVKGGLYSRRVLYMEIRGQGAIPLTRTDENFTPREIEQKAAELAYFLRVPIELK</sequence>
<comment type="function">
    <text evidence="1">Seems to be required for the assembly of the photosystem I complex.</text>
</comment>
<comment type="subcellular location">
    <subcellularLocation>
        <location evidence="1">Plastid</location>
        <location evidence="1">Chloroplast thylakoid membrane</location>
        <topology evidence="1">Multi-pass membrane protein</topology>
    </subcellularLocation>
</comment>
<comment type="similarity">
    <text evidence="1">Belongs to the Ycf4 family.</text>
</comment>
<feature type="chain" id="PRO_0000217598" description="Photosystem I assembly protein Ycf4">
    <location>
        <begin position="1"/>
        <end position="184"/>
    </location>
</feature>
<feature type="transmembrane region" description="Helical" evidence="1">
    <location>
        <begin position="21"/>
        <end position="43"/>
    </location>
</feature>
<feature type="transmembrane region" description="Helical" evidence="1">
    <location>
        <begin position="58"/>
        <end position="80"/>
    </location>
</feature>
<keyword id="KW-0150">Chloroplast</keyword>
<keyword id="KW-0472">Membrane</keyword>
<keyword id="KW-0602">Photosynthesis</keyword>
<keyword id="KW-0934">Plastid</keyword>
<keyword id="KW-0793">Thylakoid</keyword>
<keyword id="KW-0812">Transmembrane</keyword>
<keyword id="KW-1133">Transmembrane helix</keyword>